<gene>
    <name evidence="1" type="primary">purM</name>
    <name type="ordered locus">lhv_1527</name>
</gene>
<sequence>MNRYKDAGVDVEAGYDLVKRIKKDIAATSRPETSGTIGSFGGMFDLEKLGYQHPVLVSGTDGVGTKLMIAQEMGINDTIGIDCVAMCVNDVLAQGAEPLFFLDYIATGHNDPAKLAQVVHGVAEGCRQSGSALIGGETAEMPDMYPKNEYDLAGFSTGIANKEDILTQDLAKEGDILIGLPSSGVHSNGFSLIRQVLFKDHHLKVTDRPEALEGKSIGEILLTPTKIYVQAVLSLVKRHLLHGIAHITGGGLIENLPRTYNDDLQAEVNLGAWPVQAIFRYLQNKGQLKEQDCLNTFNMGIGLVLLVPKANVLQVKEQLKQKNEQYYEIGKLRKRPIGEKKIVFNGSFK</sequence>
<protein>
    <recommendedName>
        <fullName evidence="1">Phosphoribosylformylglycinamidine cyclo-ligase</fullName>
        <ecNumber evidence="1">6.3.3.1</ecNumber>
    </recommendedName>
    <alternativeName>
        <fullName evidence="1">AIR synthase</fullName>
    </alternativeName>
    <alternativeName>
        <fullName evidence="1">AIRS</fullName>
    </alternativeName>
    <alternativeName>
        <fullName evidence="1">Phosphoribosyl-aminoimidazole synthetase</fullName>
    </alternativeName>
</protein>
<evidence type="ECO:0000255" key="1">
    <source>
        <dbReference type="HAMAP-Rule" id="MF_00741"/>
    </source>
</evidence>
<name>PUR5_LACH4</name>
<feature type="chain" id="PRO_1000072815" description="Phosphoribosylformylglycinamidine cyclo-ligase">
    <location>
        <begin position="1"/>
        <end position="349"/>
    </location>
</feature>
<dbReference type="EC" id="6.3.3.1" evidence="1"/>
<dbReference type="EMBL" id="CP000517">
    <property type="protein sequence ID" value="ABX27469.1"/>
    <property type="molecule type" value="Genomic_DNA"/>
</dbReference>
<dbReference type="RefSeq" id="WP_003627023.1">
    <property type="nucleotide sequence ID" value="NC_010080.1"/>
</dbReference>
<dbReference type="SMR" id="A8YW83"/>
<dbReference type="KEGG" id="lhe:lhv_1527"/>
<dbReference type="eggNOG" id="COG0150">
    <property type="taxonomic scope" value="Bacteria"/>
</dbReference>
<dbReference type="HOGENOM" id="CLU_047116_0_0_9"/>
<dbReference type="UniPathway" id="UPA00074">
    <property type="reaction ID" value="UER00129"/>
</dbReference>
<dbReference type="Proteomes" id="UP000000790">
    <property type="component" value="Chromosome"/>
</dbReference>
<dbReference type="GO" id="GO:0005829">
    <property type="term" value="C:cytosol"/>
    <property type="evidence" value="ECO:0007669"/>
    <property type="project" value="TreeGrafter"/>
</dbReference>
<dbReference type="GO" id="GO:0005524">
    <property type="term" value="F:ATP binding"/>
    <property type="evidence" value="ECO:0007669"/>
    <property type="project" value="UniProtKB-KW"/>
</dbReference>
<dbReference type="GO" id="GO:0004637">
    <property type="term" value="F:phosphoribosylamine-glycine ligase activity"/>
    <property type="evidence" value="ECO:0007669"/>
    <property type="project" value="TreeGrafter"/>
</dbReference>
<dbReference type="GO" id="GO:0004641">
    <property type="term" value="F:phosphoribosylformylglycinamidine cyclo-ligase activity"/>
    <property type="evidence" value="ECO:0007669"/>
    <property type="project" value="UniProtKB-UniRule"/>
</dbReference>
<dbReference type="GO" id="GO:0006189">
    <property type="term" value="P:'de novo' IMP biosynthetic process"/>
    <property type="evidence" value="ECO:0007669"/>
    <property type="project" value="UniProtKB-UniRule"/>
</dbReference>
<dbReference type="GO" id="GO:0046084">
    <property type="term" value="P:adenine biosynthetic process"/>
    <property type="evidence" value="ECO:0007669"/>
    <property type="project" value="TreeGrafter"/>
</dbReference>
<dbReference type="CDD" id="cd02196">
    <property type="entry name" value="PurM"/>
    <property type="match status" value="1"/>
</dbReference>
<dbReference type="FunFam" id="3.30.1330.10:FF:000001">
    <property type="entry name" value="Phosphoribosylformylglycinamidine cyclo-ligase"/>
    <property type="match status" value="1"/>
</dbReference>
<dbReference type="FunFam" id="3.90.650.10:FF:000011">
    <property type="entry name" value="Phosphoribosylformylglycinamidine cyclo-ligase"/>
    <property type="match status" value="1"/>
</dbReference>
<dbReference type="Gene3D" id="3.90.650.10">
    <property type="entry name" value="PurM-like C-terminal domain"/>
    <property type="match status" value="1"/>
</dbReference>
<dbReference type="Gene3D" id="3.30.1330.10">
    <property type="entry name" value="PurM-like, N-terminal domain"/>
    <property type="match status" value="1"/>
</dbReference>
<dbReference type="HAMAP" id="MF_00741">
    <property type="entry name" value="AIRS"/>
    <property type="match status" value="1"/>
</dbReference>
<dbReference type="InterPro" id="IPR010918">
    <property type="entry name" value="PurM-like_C_dom"/>
</dbReference>
<dbReference type="InterPro" id="IPR036676">
    <property type="entry name" value="PurM-like_C_sf"/>
</dbReference>
<dbReference type="InterPro" id="IPR016188">
    <property type="entry name" value="PurM-like_N"/>
</dbReference>
<dbReference type="InterPro" id="IPR036921">
    <property type="entry name" value="PurM-like_N_sf"/>
</dbReference>
<dbReference type="InterPro" id="IPR004733">
    <property type="entry name" value="PurM_cligase"/>
</dbReference>
<dbReference type="NCBIfam" id="TIGR00878">
    <property type="entry name" value="purM"/>
    <property type="match status" value="1"/>
</dbReference>
<dbReference type="PANTHER" id="PTHR10520:SF12">
    <property type="entry name" value="TRIFUNCTIONAL PURINE BIOSYNTHETIC PROTEIN ADENOSINE-3"/>
    <property type="match status" value="1"/>
</dbReference>
<dbReference type="PANTHER" id="PTHR10520">
    <property type="entry name" value="TRIFUNCTIONAL PURINE BIOSYNTHETIC PROTEIN ADENOSINE-3-RELATED"/>
    <property type="match status" value="1"/>
</dbReference>
<dbReference type="Pfam" id="PF00586">
    <property type="entry name" value="AIRS"/>
    <property type="match status" value="1"/>
</dbReference>
<dbReference type="Pfam" id="PF02769">
    <property type="entry name" value="AIRS_C"/>
    <property type="match status" value="1"/>
</dbReference>
<dbReference type="SUPFAM" id="SSF56042">
    <property type="entry name" value="PurM C-terminal domain-like"/>
    <property type="match status" value="1"/>
</dbReference>
<dbReference type="SUPFAM" id="SSF55326">
    <property type="entry name" value="PurM N-terminal domain-like"/>
    <property type="match status" value="1"/>
</dbReference>
<accession>A8YW83</accession>
<organism>
    <name type="scientific">Lactobacillus helveticus (strain DPC 4571)</name>
    <dbReference type="NCBI Taxonomy" id="405566"/>
    <lineage>
        <taxon>Bacteria</taxon>
        <taxon>Bacillati</taxon>
        <taxon>Bacillota</taxon>
        <taxon>Bacilli</taxon>
        <taxon>Lactobacillales</taxon>
        <taxon>Lactobacillaceae</taxon>
        <taxon>Lactobacillus</taxon>
    </lineage>
</organism>
<comment type="catalytic activity">
    <reaction evidence="1">
        <text>2-formamido-N(1)-(5-O-phospho-beta-D-ribosyl)acetamidine + ATP = 5-amino-1-(5-phospho-beta-D-ribosyl)imidazole + ADP + phosphate + H(+)</text>
        <dbReference type="Rhea" id="RHEA:23032"/>
        <dbReference type="ChEBI" id="CHEBI:15378"/>
        <dbReference type="ChEBI" id="CHEBI:30616"/>
        <dbReference type="ChEBI" id="CHEBI:43474"/>
        <dbReference type="ChEBI" id="CHEBI:137981"/>
        <dbReference type="ChEBI" id="CHEBI:147287"/>
        <dbReference type="ChEBI" id="CHEBI:456216"/>
        <dbReference type="EC" id="6.3.3.1"/>
    </reaction>
</comment>
<comment type="pathway">
    <text evidence="1">Purine metabolism; IMP biosynthesis via de novo pathway; 5-amino-1-(5-phospho-D-ribosyl)imidazole from N(2)-formyl-N(1)-(5-phospho-D-ribosyl)glycinamide: step 2/2.</text>
</comment>
<comment type="subcellular location">
    <subcellularLocation>
        <location evidence="1">Cytoplasm</location>
    </subcellularLocation>
</comment>
<comment type="similarity">
    <text evidence="1">Belongs to the AIR synthase family.</text>
</comment>
<keyword id="KW-0067">ATP-binding</keyword>
<keyword id="KW-0963">Cytoplasm</keyword>
<keyword id="KW-0436">Ligase</keyword>
<keyword id="KW-0547">Nucleotide-binding</keyword>
<keyword id="KW-0658">Purine biosynthesis</keyword>
<reference key="1">
    <citation type="journal article" date="2008" name="J. Bacteriol.">
        <title>Genome sequence of Lactobacillus helveticus: an organism distinguished by selective gene loss and IS element expansion.</title>
        <authorList>
            <person name="Callanan M."/>
            <person name="Kaleta P."/>
            <person name="O'Callaghan J."/>
            <person name="O'Sullivan O."/>
            <person name="Jordan K."/>
            <person name="McAuliffe O."/>
            <person name="Sangrador-Vegas A."/>
            <person name="Slattery L."/>
            <person name="Fitzgerald G.F."/>
            <person name="Beresford T."/>
            <person name="Ross R.P."/>
        </authorList>
    </citation>
    <scope>NUCLEOTIDE SEQUENCE [LARGE SCALE GENOMIC DNA]</scope>
    <source>
        <strain>DPC 4571</strain>
    </source>
</reference>
<proteinExistence type="inferred from homology"/>